<dbReference type="EMBL" id="CP000962">
    <property type="protein sequence ID" value="ACA54352.1"/>
    <property type="molecule type" value="Genomic_DNA"/>
</dbReference>
<dbReference type="RefSeq" id="WP_003358905.1">
    <property type="nucleotide sequence ID" value="NC_010520.1"/>
</dbReference>
<dbReference type="SMR" id="B1KT65"/>
<dbReference type="GeneID" id="5186152"/>
<dbReference type="KEGG" id="cbl:CLK_1287"/>
<dbReference type="HOGENOM" id="CLU_074944_0_1_9"/>
<dbReference type="UniPathway" id="UPA00345"/>
<dbReference type="GO" id="GO:0005737">
    <property type="term" value="C:cytoplasm"/>
    <property type="evidence" value="ECO:0007669"/>
    <property type="project" value="UniProtKB-SubCell"/>
</dbReference>
<dbReference type="GO" id="GO:0003746">
    <property type="term" value="F:translation elongation factor activity"/>
    <property type="evidence" value="ECO:0007669"/>
    <property type="project" value="UniProtKB-UniRule"/>
</dbReference>
<dbReference type="GO" id="GO:0043043">
    <property type="term" value="P:peptide biosynthetic process"/>
    <property type="evidence" value="ECO:0007669"/>
    <property type="project" value="InterPro"/>
</dbReference>
<dbReference type="CDD" id="cd04470">
    <property type="entry name" value="S1_EF-P_repeat_1"/>
    <property type="match status" value="1"/>
</dbReference>
<dbReference type="CDD" id="cd05794">
    <property type="entry name" value="S1_EF-P_repeat_2"/>
    <property type="match status" value="1"/>
</dbReference>
<dbReference type="FunFam" id="2.30.30.30:FF:000003">
    <property type="entry name" value="Elongation factor P"/>
    <property type="match status" value="1"/>
</dbReference>
<dbReference type="FunFam" id="2.40.50.140:FF:000004">
    <property type="entry name" value="Elongation factor P"/>
    <property type="match status" value="1"/>
</dbReference>
<dbReference type="FunFam" id="2.40.50.140:FF:000009">
    <property type="entry name" value="Elongation factor P"/>
    <property type="match status" value="1"/>
</dbReference>
<dbReference type="Gene3D" id="2.30.30.30">
    <property type="match status" value="1"/>
</dbReference>
<dbReference type="Gene3D" id="2.40.50.140">
    <property type="entry name" value="Nucleic acid-binding proteins"/>
    <property type="match status" value="2"/>
</dbReference>
<dbReference type="HAMAP" id="MF_00141">
    <property type="entry name" value="EF_P"/>
    <property type="match status" value="1"/>
</dbReference>
<dbReference type="InterPro" id="IPR015365">
    <property type="entry name" value="Elong-fact-P_C"/>
</dbReference>
<dbReference type="InterPro" id="IPR012340">
    <property type="entry name" value="NA-bd_OB-fold"/>
</dbReference>
<dbReference type="InterPro" id="IPR014722">
    <property type="entry name" value="Rib_uL2_dom2"/>
</dbReference>
<dbReference type="InterPro" id="IPR020599">
    <property type="entry name" value="Transl_elong_fac_P/YeiP"/>
</dbReference>
<dbReference type="InterPro" id="IPR013185">
    <property type="entry name" value="Transl_elong_KOW-like"/>
</dbReference>
<dbReference type="InterPro" id="IPR001059">
    <property type="entry name" value="Transl_elong_P/YeiP_cen"/>
</dbReference>
<dbReference type="InterPro" id="IPR013852">
    <property type="entry name" value="Transl_elong_P/YeiP_CS"/>
</dbReference>
<dbReference type="InterPro" id="IPR011768">
    <property type="entry name" value="Transl_elongation_fac_P"/>
</dbReference>
<dbReference type="InterPro" id="IPR008991">
    <property type="entry name" value="Translation_prot_SH3-like_sf"/>
</dbReference>
<dbReference type="NCBIfam" id="TIGR00038">
    <property type="entry name" value="efp"/>
    <property type="match status" value="1"/>
</dbReference>
<dbReference type="NCBIfam" id="NF001810">
    <property type="entry name" value="PRK00529.1"/>
    <property type="match status" value="1"/>
</dbReference>
<dbReference type="PANTHER" id="PTHR30053">
    <property type="entry name" value="ELONGATION FACTOR P"/>
    <property type="match status" value="1"/>
</dbReference>
<dbReference type="PANTHER" id="PTHR30053:SF12">
    <property type="entry name" value="ELONGATION FACTOR P (EF-P) FAMILY PROTEIN"/>
    <property type="match status" value="1"/>
</dbReference>
<dbReference type="Pfam" id="PF01132">
    <property type="entry name" value="EFP"/>
    <property type="match status" value="1"/>
</dbReference>
<dbReference type="Pfam" id="PF08207">
    <property type="entry name" value="EFP_N"/>
    <property type="match status" value="1"/>
</dbReference>
<dbReference type="Pfam" id="PF09285">
    <property type="entry name" value="Elong-fact-P_C"/>
    <property type="match status" value="1"/>
</dbReference>
<dbReference type="PIRSF" id="PIRSF005901">
    <property type="entry name" value="EF-P"/>
    <property type="match status" value="1"/>
</dbReference>
<dbReference type="SMART" id="SM01185">
    <property type="entry name" value="EFP"/>
    <property type="match status" value="1"/>
</dbReference>
<dbReference type="SMART" id="SM00841">
    <property type="entry name" value="Elong-fact-P_C"/>
    <property type="match status" value="1"/>
</dbReference>
<dbReference type="SUPFAM" id="SSF50249">
    <property type="entry name" value="Nucleic acid-binding proteins"/>
    <property type="match status" value="2"/>
</dbReference>
<dbReference type="SUPFAM" id="SSF50104">
    <property type="entry name" value="Translation proteins SH3-like domain"/>
    <property type="match status" value="1"/>
</dbReference>
<dbReference type="PROSITE" id="PS01275">
    <property type="entry name" value="EFP"/>
    <property type="match status" value="1"/>
</dbReference>
<reference key="1">
    <citation type="journal article" date="2007" name="PLoS ONE">
        <title>Analysis of the neurotoxin complex genes in Clostridium botulinum A1-A4 and B1 strains: BoNT/A3, /Ba4 and /B1 clusters are located within plasmids.</title>
        <authorList>
            <person name="Smith T.J."/>
            <person name="Hill K.K."/>
            <person name="Foley B.T."/>
            <person name="Detter J.C."/>
            <person name="Munk A.C."/>
            <person name="Bruce D.C."/>
            <person name="Doggett N.A."/>
            <person name="Smith L.A."/>
            <person name="Marks J.D."/>
            <person name="Xie G."/>
            <person name="Brettin T.S."/>
        </authorList>
    </citation>
    <scope>NUCLEOTIDE SEQUENCE [LARGE SCALE GENOMIC DNA]</scope>
    <source>
        <strain>Loch Maree / Type A3</strain>
    </source>
</reference>
<comment type="function">
    <text evidence="1">Involved in peptide bond synthesis. Stimulates efficient translation and peptide-bond synthesis on native or reconstituted 70S ribosomes in vitro. Probably functions indirectly by altering the affinity of the ribosome for aminoacyl-tRNA, thus increasing their reactivity as acceptors for peptidyl transferase.</text>
</comment>
<comment type="pathway">
    <text evidence="1">Protein biosynthesis; polypeptide chain elongation.</text>
</comment>
<comment type="subcellular location">
    <subcellularLocation>
        <location evidence="1">Cytoplasm</location>
    </subcellularLocation>
</comment>
<comment type="similarity">
    <text evidence="1">Belongs to the elongation factor P family.</text>
</comment>
<name>EFP_CLOBM</name>
<organism>
    <name type="scientific">Clostridium botulinum (strain Loch Maree / Type A3)</name>
    <dbReference type="NCBI Taxonomy" id="498214"/>
    <lineage>
        <taxon>Bacteria</taxon>
        <taxon>Bacillati</taxon>
        <taxon>Bacillota</taxon>
        <taxon>Clostridia</taxon>
        <taxon>Eubacteriales</taxon>
        <taxon>Clostridiaceae</taxon>
        <taxon>Clostridium</taxon>
    </lineage>
</organism>
<feature type="chain" id="PRO_1000096140" description="Elongation factor P">
    <location>
        <begin position="1"/>
        <end position="185"/>
    </location>
</feature>
<protein>
    <recommendedName>
        <fullName evidence="1">Elongation factor P</fullName>
        <shortName evidence="1">EF-P</shortName>
    </recommendedName>
</protein>
<proteinExistence type="inferred from homology"/>
<gene>
    <name evidence="1" type="primary">efp</name>
    <name type="ordered locus">CLK_1287</name>
</gene>
<accession>B1KT65</accession>
<sequence>MISAGDLRKGTTFEQDGQVYVVVEFLHVKPGKGAAFVRTKLKNAITGAVTETTFNPTAKLQEAVIERKEMQYLYTDGELYYFMDQETFEQIPLNYDKVEEAIKFLKENMFATIKFFKGEAFSVEAPNFVELLISHTEPGAKGNTTSNVMKPATLETGATIQVPLFVNEGETIRVDTRTGEYMERV</sequence>
<evidence type="ECO:0000255" key="1">
    <source>
        <dbReference type="HAMAP-Rule" id="MF_00141"/>
    </source>
</evidence>
<keyword id="KW-0963">Cytoplasm</keyword>
<keyword id="KW-0251">Elongation factor</keyword>
<keyword id="KW-0648">Protein biosynthesis</keyword>